<feature type="signal peptide" evidence="1">
    <location>
        <begin position="1"/>
        <end position="28"/>
    </location>
</feature>
<feature type="chain" id="PRO_0000244684" description="Envelope glycoprotein gp160" evidence="1">
    <location>
        <begin position="29"/>
        <end position="850"/>
    </location>
</feature>
<feature type="chain" id="PRO_0000244685" description="Surface protein gp120" evidence="1">
    <location>
        <begin position="29"/>
        <end position="505"/>
    </location>
</feature>
<feature type="chain" id="PRO_0000244686" description="Transmembrane protein gp41" evidence="1">
    <location>
        <begin position="506"/>
        <end position="850"/>
    </location>
</feature>
<feature type="topological domain" description="Extracellular" evidence="1">
    <location>
        <begin position="29"/>
        <end position="678"/>
    </location>
</feature>
<feature type="transmembrane region" description="Helical" evidence="1">
    <location>
        <begin position="679"/>
        <end position="699"/>
    </location>
</feature>
<feature type="topological domain" description="Cytoplasmic" evidence="1">
    <location>
        <begin position="700"/>
        <end position="850"/>
    </location>
</feature>
<feature type="region of interest" description="V1" evidence="1">
    <location>
        <begin position="127"/>
        <end position="152"/>
    </location>
</feature>
<feature type="region of interest" description="V2" evidence="1">
    <location>
        <begin position="153"/>
        <end position="192"/>
    </location>
</feature>
<feature type="region of interest" description="V3" evidence="1">
    <location>
        <begin position="292"/>
        <end position="325"/>
    </location>
</feature>
<feature type="region of interest" description="CD4-binding loop" evidence="1">
    <location>
        <begin position="357"/>
        <end position="367"/>
    </location>
</feature>
<feature type="region of interest" description="V4" evidence="1">
    <location>
        <begin position="378"/>
        <end position="409"/>
    </location>
</feature>
<feature type="region of interest" description="Disordered" evidence="2">
    <location>
        <begin position="447"/>
        <end position="467"/>
    </location>
</feature>
<feature type="region of interest" description="V5">
    <location>
        <begin position="453"/>
        <end position="465"/>
    </location>
</feature>
<feature type="region of interest" description="V5" evidence="1">
    <location>
        <begin position="454"/>
        <end position="465"/>
    </location>
</feature>
<feature type="region of interest" description="Fusion peptide" evidence="1">
    <location>
        <begin position="506"/>
        <end position="526"/>
    </location>
</feature>
<feature type="region of interest" description="Immunosuppression" evidence="1">
    <location>
        <begin position="568"/>
        <end position="586"/>
    </location>
</feature>
<feature type="region of interest" description="MPER; binding to GalCer" evidence="1">
    <location>
        <begin position="656"/>
        <end position="677"/>
    </location>
</feature>
<feature type="coiled-coil region" evidence="1">
    <location>
        <begin position="627"/>
        <end position="661"/>
    </location>
</feature>
<feature type="short sequence motif" description="YXXL motif; contains endocytosis signal" evidence="1">
    <location>
        <begin position="706"/>
        <end position="709"/>
    </location>
</feature>
<feature type="short sequence motif" description="Di-leucine internalization motif" evidence="1">
    <location>
        <begin position="849"/>
        <end position="850"/>
    </location>
</feature>
<feature type="compositionally biased region" description="Polar residues" evidence="2">
    <location>
        <begin position="453"/>
        <end position="462"/>
    </location>
</feature>
<feature type="site" description="Cleavage; by host furin" evidence="1">
    <location>
        <begin position="505"/>
        <end position="506"/>
    </location>
</feature>
<feature type="lipid moiety-binding region" description="S-palmitoyl cysteine; by host" evidence="1">
    <location>
        <position position="758"/>
    </location>
</feature>
<feature type="glycosylation site" description="N-linked (GlcNAc...) asparagine; by host" evidence="1">
    <location>
        <position position="84"/>
    </location>
</feature>
<feature type="glycosylation site" description="N-linked (GlcNAc...) asparagine; by host" evidence="1">
    <location>
        <position position="126"/>
    </location>
</feature>
<feature type="glycosylation site" description="N-linked (GlcNAc...) asparagine; by host" evidence="1">
    <location>
        <position position="133"/>
    </location>
</feature>
<feature type="glycosylation site" description="N-linked (GlcNAc...) asparagine; by host" evidence="1">
    <location>
        <position position="134"/>
    </location>
</feature>
<feature type="glycosylation site" description="N-linked (GlcNAc...) asparagine; by host" evidence="1">
    <location>
        <position position="139"/>
    </location>
</feature>
<feature type="glycosylation site" description="N-linked (GlcNAc...) asparagine; by host" evidence="1">
    <location>
        <position position="152"/>
    </location>
</feature>
<feature type="glycosylation site" description="N-linked (GlcNAc...) asparagine; by host" evidence="1">
    <location>
        <position position="156"/>
    </location>
</feature>
<feature type="glycosylation site" description="N-linked (GlcNAc...) asparagine; by host" evidence="1">
    <location>
        <position position="184"/>
    </location>
</feature>
<feature type="glycosylation site" description="N-linked (GlcNAc...) asparagine; by host" evidence="1">
    <location>
        <position position="193"/>
    </location>
</feature>
<feature type="glycosylation site" description="N-linked (GlcNAc...) asparagine; by host" evidence="1">
    <location>
        <position position="226"/>
    </location>
</feature>
<feature type="glycosylation site" description="N-linked (GlcNAc...) asparagine; by host" evidence="1">
    <location>
        <position position="230"/>
    </location>
</feature>
<feature type="glycosylation site" description="N-linked (GlcNAc...) asparagine; by host" evidence="1">
    <location>
        <position position="237"/>
    </location>
</feature>
<feature type="glycosylation site" description="N-linked (GlcNAc...) asparagine; by host" evidence="1">
    <location>
        <position position="258"/>
    </location>
</feature>
<feature type="glycosylation site" description="N-linked (GlcNAc...) asparagine; by host" evidence="1">
    <location>
        <position position="272"/>
    </location>
</feature>
<feature type="glycosylation site" description="N-linked (GlcNAc...) asparagine; by host" evidence="1">
    <location>
        <position position="285"/>
    </location>
</feature>
<feature type="glycosylation site" description="N-linked (GlcNAc...) asparagine; by host" evidence="1">
    <location>
        <position position="297"/>
    </location>
</feature>
<feature type="glycosylation site" description="N-linked (GlcNAc...) asparagine; by host" evidence="1">
    <location>
        <position position="327"/>
    </location>
</feature>
<feature type="glycosylation site" description="N-linked (GlcNAc...) asparagine; by host" evidence="1">
    <location>
        <position position="334"/>
    </location>
</feature>
<feature type="glycosylation site" description="N-linked (GlcNAc...) asparagine; by host" evidence="1">
    <location>
        <position position="349"/>
    </location>
</feature>
<feature type="glycosylation site" description="N-linked (GlcNAc...) asparagine; by host" evidence="1">
    <location>
        <position position="379"/>
    </location>
</feature>
<feature type="glycosylation site" description="N-linked (GlcNAc...) asparagine; by host" evidence="1">
    <location>
        <position position="385"/>
    </location>
</feature>
<feature type="glycosylation site" description="N-linked (GlcNAc...) asparagine; by host" evidence="1">
    <location>
        <position position="397"/>
    </location>
</feature>
<feature type="glycosylation site" description="N-linked (GlcNAc...) asparagine; by host" evidence="1">
    <location>
        <position position="402"/>
    </location>
</feature>
<feature type="glycosylation site" description="N-linked (GlcNAc...) asparagine; by host" evidence="1">
    <location>
        <position position="433"/>
    </location>
</feature>
<feature type="glycosylation site" description="N-linked (GlcNAc...) asparagine; by host" evidence="1">
    <location>
        <position position="439"/>
    </location>
</feature>
<feature type="glycosylation site" description="N-linked (GlcNAc...) asparagine; by host" evidence="1">
    <location>
        <position position="453"/>
    </location>
</feature>
<feature type="glycosylation site" description="N-linked (GlcNAc...) asparagine; by host" evidence="1">
    <location>
        <position position="457"/>
    </location>
</feature>
<feature type="glycosylation site" description="N-linked (GlcNAc...) asparagine; by host" evidence="1">
    <location>
        <position position="605"/>
    </location>
</feature>
<feature type="glycosylation site" description="N-linked (GlcNAc...) asparagine; by host" evidence="1">
    <location>
        <position position="610"/>
    </location>
</feature>
<feature type="glycosylation site" description="N-linked (GlcNAc...) asparagine; by host" evidence="1">
    <location>
        <position position="619"/>
    </location>
</feature>
<feature type="glycosylation site" description="N-linked (GlcNAc...) asparagine; by host" evidence="1">
    <location>
        <position position="631"/>
    </location>
</feature>
<feature type="glycosylation site" description="N-linked (GlcNAc...) asparagine; by host" evidence="1">
    <location>
        <position position="668"/>
    </location>
</feature>
<feature type="disulfide bond" evidence="1">
    <location>
        <begin position="50"/>
        <end position="70"/>
    </location>
</feature>
<feature type="disulfide bond" evidence="1">
    <location>
        <begin position="115"/>
        <end position="201"/>
    </location>
</feature>
<feature type="disulfide bond" evidence="1">
    <location>
        <begin position="122"/>
        <end position="192"/>
    </location>
</feature>
<feature type="disulfide bond" evidence="1">
    <location>
        <begin position="127"/>
        <end position="153"/>
    </location>
</feature>
<feature type="disulfide bond" evidence="1">
    <location>
        <begin position="214"/>
        <end position="243"/>
    </location>
</feature>
<feature type="disulfide bond" evidence="1">
    <location>
        <begin position="224"/>
        <end position="235"/>
    </location>
</feature>
<feature type="disulfide bond" evidence="1">
    <location>
        <begin position="292"/>
        <end position="326"/>
    </location>
</feature>
<feature type="disulfide bond" evidence="1">
    <location>
        <begin position="371"/>
        <end position="436"/>
    </location>
</feature>
<feature type="disulfide bond" evidence="1">
    <location>
        <begin position="378"/>
        <end position="409"/>
    </location>
</feature>
<feature type="disulfide bond" evidence="1">
    <location>
        <begin position="592"/>
        <end position="598"/>
    </location>
</feature>
<proteinExistence type="inferred from homology"/>
<dbReference type="EMBL" id="AF082395">
    <property type="protein sequence ID" value="AAD17768.1"/>
    <property type="molecule type" value="Genomic_DNA"/>
</dbReference>
<dbReference type="GlyCosmos" id="Q9WC69">
    <property type="glycosylation" value="32 sites, No reported glycans"/>
</dbReference>
<dbReference type="Proteomes" id="UP000123434">
    <property type="component" value="Segment"/>
</dbReference>
<dbReference type="GO" id="GO:0044175">
    <property type="term" value="C:host cell endosome membrane"/>
    <property type="evidence" value="ECO:0007669"/>
    <property type="project" value="UniProtKB-SubCell"/>
</dbReference>
<dbReference type="GO" id="GO:0020002">
    <property type="term" value="C:host cell plasma membrane"/>
    <property type="evidence" value="ECO:0007669"/>
    <property type="project" value="UniProtKB-SubCell"/>
</dbReference>
<dbReference type="GO" id="GO:0016020">
    <property type="term" value="C:membrane"/>
    <property type="evidence" value="ECO:0007669"/>
    <property type="project" value="UniProtKB-UniRule"/>
</dbReference>
<dbReference type="GO" id="GO:0019031">
    <property type="term" value="C:viral envelope"/>
    <property type="evidence" value="ECO:0007669"/>
    <property type="project" value="UniProtKB-KW"/>
</dbReference>
<dbReference type="GO" id="GO:0055036">
    <property type="term" value="C:virion membrane"/>
    <property type="evidence" value="ECO:0007669"/>
    <property type="project" value="UniProtKB-SubCell"/>
</dbReference>
<dbReference type="GO" id="GO:0005198">
    <property type="term" value="F:structural molecule activity"/>
    <property type="evidence" value="ECO:0007669"/>
    <property type="project" value="UniProtKB-UniRule"/>
</dbReference>
<dbReference type="GO" id="GO:0075512">
    <property type="term" value="P:clathrin-dependent endocytosis of virus by host cell"/>
    <property type="evidence" value="ECO:0007669"/>
    <property type="project" value="UniProtKB-UniRule"/>
</dbReference>
<dbReference type="GO" id="GO:0039654">
    <property type="term" value="P:fusion of virus membrane with host endosome membrane"/>
    <property type="evidence" value="ECO:0007669"/>
    <property type="project" value="UniProtKB-UniRule"/>
</dbReference>
<dbReference type="GO" id="GO:0019064">
    <property type="term" value="P:fusion of virus membrane with host plasma membrane"/>
    <property type="evidence" value="ECO:0007669"/>
    <property type="project" value="UniProtKB-UniRule"/>
</dbReference>
<dbReference type="GO" id="GO:1903908">
    <property type="term" value="P:positive regulation of plasma membrane raft polarization"/>
    <property type="evidence" value="ECO:0007669"/>
    <property type="project" value="UniProtKB-UniRule"/>
</dbReference>
<dbReference type="GO" id="GO:1903911">
    <property type="term" value="P:positive regulation of receptor clustering"/>
    <property type="evidence" value="ECO:0007669"/>
    <property type="project" value="UniProtKB-UniRule"/>
</dbReference>
<dbReference type="GO" id="GO:0019082">
    <property type="term" value="P:viral protein processing"/>
    <property type="evidence" value="ECO:0007669"/>
    <property type="project" value="UniProtKB-UniRule"/>
</dbReference>
<dbReference type="GO" id="GO:0019062">
    <property type="term" value="P:virion attachment to host cell"/>
    <property type="evidence" value="ECO:0007669"/>
    <property type="project" value="UniProtKB-UniRule"/>
</dbReference>
<dbReference type="CDD" id="cd09909">
    <property type="entry name" value="HIV-1-like_HR1-HR2"/>
    <property type="match status" value="1"/>
</dbReference>
<dbReference type="FunFam" id="1.10.287.210:FF:000001">
    <property type="entry name" value="Envelope glycoprotein gp160"/>
    <property type="match status" value="1"/>
</dbReference>
<dbReference type="FunFam" id="2.170.40.20:FF:000003">
    <property type="entry name" value="Envelope glycoprotein gp160"/>
    <property type="match status" value="1"/>
</dbReference>
<dbReference type="FunFam" id="2.170.40.20:FF:000004">
    <property type="entry name" value="Envelope glycoprotein gp160"/>
    <property type="match status" value="1"/>
</dbReference>
<dbReference type="Gene3D" id="1.10.287.210">
    <property type="match status" value="1"/>
</dbReference>
<dbReference type="Gene3D" id="2.170.40.20">
    <property type="entry name" value="Human immunodeficiency virus 1, Gp160, envelope glycoprotein"/>
    <property type="match status" value="2"/>
</dbReference>
<dbReference type="Gene3D" id="1.20.5.490">
    <property type="entry name" value="Single helix bin"/>
    <property type="match status" value="1"/>
</dbReference>
<dbReference type="HAMAP" id="MF_04083">
    <property type="entry name" value="HIV_ENV"/>
    <property type="match status" value="1"/>
</dbReference>
<dbReference type="InterPro" id="IPR036377">
    <property type="entry name" value="Gp120_core_sf"/>
</dbReference>
<dbReference type="InterPro" id="IPR037527">
    <property type="entry name" value="Gp160"/>
</dbReference>
<dbReference type="InterPro" id="IPR000328">
    <property type="entry name" value="GP41-like"/>
</dbReference>
<dbReference type="InterPro" id="IPR000777">
    <property type="entry name" value="HIV1_Gp120"/>
</dbReference>
<dbReference type="Pfam" id="PF00516">
    <property type="entry name" value="GP120"/>
    <property type="match status" value="1"/>
</dbReference>
<dbReference type="Pfam" id="PF00517">
    <property type="entry name" value="GP41"/>
    <property type="match status" value="1"/>
</dbReference>
<dbReference type="SUPFAM" id="SSF56502">
    <property type="entry name" value="gp120 core"/>
    <property type="match status" value="2"/>
</dbReference>
<dbReference type="SUPFAM" id="SSF58069">
    <property type="entry name" value="Virus ectodomain"/>
    <property type="match status" value="1"/>
</dbReference>
<name>ENV_HV1S9</name>
<evidence type="ECO:0000255" key="1">
    <source>
        <dbReference type="HAMAP-Rule" id="MF_04083"/>
    </source>
</evidence>
<evidence type="ECO:0000256" key="2">
    <source>
        <dbReference type="SAM" id="MobiDB-lite"/>
    </source>
</evidence>
<comment type="function">
    <molecule>Envelope glycoprotein gp160</molecule>
    <text evidence="1">Oligomerizes in the host endoplasmic reticulum into predominantly trimers. In a second time, gp160 transits in the host Golgi, where glycosylation is completed. The precursor is then proteolytically cleaved in the trans-Golgi and thereby activated by cellular furin or furin-like proteases to produce gp120 and gp41.</text>
</comment>
<comment type="function">
    <molecule>Surface protein gp120</molecule>
    <text evidence="1">Attaches the virus to the host lymphoid cell by binding to the primary receptor CD4. This interaction induces a structural rearrangement creating a high affinity binding site for a chemokine coreceptor like CXCR4 and/or CCR5. Acts as a ligand for CD209/DC-SIGN and CLEC4M/DC-SIGNR, which are respectively found on dendritic cells (DCs), and on endothelial cells of liver sinusoids and lymph node sinuses. These interactions allow capture of viral particles at mucosal surfaces by these cells and subsequent transmission to permissive cells. HIV subverts the migration properties of dendritic cells to gain access to CD4+ T-cells in lymph nodes. Virus transmission to permissive T-cells occurs either in trans (without DCs infection, through viral capture and transmission), or in cis (following DCs productive infection, through the usual CD4-gp120 interaction), thereby inducing a robust infection. In trans infection, bound virions remain infectious over days and it is proposed that they are not degraded, but protected in non-lysosomal acidic organelles within the DCs close to the cell membrane thus contributing to the viral infectious potential during DCs' migration from the periphery to the lymphoid tissues. On arrival at lymphoid tissues, intact virions recycle back to DCs' cell surface allowing virus transmission to CD4+ T-cells.</text>
</comment>
<comment type="function">
    <molecule>Transmembrane protein gp41</molecule>
    <text evidence="1">Acts as a class I viral fusion protein. Under the current model, the protein has at least 3 conformational states: pre-fusion native state, pre-hairpin intermediate state, and post-fusion hairpin state. During fusion of viral and target intracellular membranes, the coiled coil regions (heptad repeats) assume a trimer-of-hairpins structure, positioning the fusion peptide in close proximity to the C-terminal region of the ectodomain. The formation of this structure appears to drive apposition and subsequent fusion of viral and target cell membranes. Complete fusion occurs in host cell endosomes and is dynamin-dependent, however some lipid transfer might occur at the plasma membrane. The virus undergoes clathrin-dependent internalization long before endosomal fusion, thus minimizing the surface exposure of conserved viral epitopes during fusion and reducing the efficacy of inhibitors targeting these epitopes. Membranes fusion leads to delivery of the nucleocapsid into the cytoplasm.</text>
</comment>
<comment type="subunit">
    <molecule>Surface protein gp120</molecule>
    <text evidence="1">The mature envelope protein (Env) consists of a homotrimer of non-covalently associated gp120-gp41 heterodimers. The resulting complex protrudes from the virus surface as a spike. There seems to be as few as 10 spikes on the average virion. Interacts with host CD4, CCR5 and CXCR4. Gp120 also interacts with the C-type lectins CD209/DC-SIGN and CLEC4M/DC-SIGNR (collectively referred to as DC-SIGN(R)). Gp120 and gp41 interact with GalCer. Gp120 interacts with host ITGA4/ITGB7 complex; on CD4+ T-cells, this interaction results in rapid activation of integrin ITGAL/LFA-1, which facilitates efficient cell-to-cell spreading of HIV-1. Gp120 interacts with cell-associated heparan sulfate; this interaction increases virus infectivity on permissive cells and may be involved in infection of CD4- cells.</text>
</comment>
<comment type="subunit">
    <molecule>Transmembrane protein gp41</molecule>
    <text evidence="1">The mature envelope protein (Env) consists of a homotrimer of non-covalently associated gp120-gp41 heterodimers. The resulting complex protrudes from the virus surface as a spike. There seems to be as few as 10 spikes on the average virion.</text>
</comment>
<comment type="subcellular location">
    <molecule>Surface protein gp120</molecule>
    <subcellularLocation>
        <location evidence="1">Virion membrane</location>
        <topology evidence="1">Peripheral membrane protein</topology>
    </subcellularLocation>
    <subcellularLocation>
        <location evidence="1">Host cell membrane</location>
        <topology evidence="1">Peripheral membrane protein</topology>
    </subcellularLocation>
    <subcellularLocation>
        <location evidence="1">Host endosome membrane</location>
        <topology evidence="1">Single-pass type I membrane protein</topology>
    </subcellularLocation>
    <text evidence="1">The surface protein is not anchored to the viral envelope, but associates with the extravirion surface through its binding to TM. It is probably concentrated at the site of budding and incorporated into the virions possibly by contacts between the cytoplasmic tail of Env and the N-terminus of Gag.</text>
</comment>
<comment type="subcellular location">
    <molecule>Transmembrane protein gp41</molecule>
    <subcellularLocation>
        <location evidence="1">Virion membrane</location>
        <topology evidence="1">Single-pass type I membrane protein</topology>
    </subcellularLocation>
    <subcellularLocation>
        <location evidence="1">Host cell membrane</location>
        <topology evidence="1">Single-pass type I membrane protein</topology>
    </subcellularLocation>
    <subcellularLocation>
        <location evidence="1">Host endosome membrane</location>
        <topology evidence="1">Single-pass type I membrane protein</topology>
    </subcellularLocation>
    <text evidence="1">It is probably concentrated at the site of budding and incorporated into the virions possibly by contacts between the cytoplasmic tail of Env and the N-terminus of Gag.</text>
</comment>
<comment type="domain">
    <text evidence="1">Some of the most genetically diverse regions of the viral genome are present in Env. They are called variable regions 1 through 5 (V1 through V5). Coreceptor usage of gp120 is determined mainly by the primary structure of the third variable region (V3) in the outer domain of gp120. The sequence of V3 determines which coreceptor, CCR5 and/or CXCR4 (corresponding to R5/macrophage, X4/T cell and R5X4/T cell and macrophage tropism), is used to trigger the fusion potential of the Env complex, and hence which cells the virus can infect. Binding to CCR5 involves a region adjacent in addition to V3.</text>
</comment>
<comment type="domain">
    <text evidence="1">The membrane proximal external region (MPER) present in gp41 is a tryptophan-rich region recognized by the antibodies 2F5, Z13, and 4E10. MPER seems to play a role in fusion.</text>
</comment>
<comment type="domain">
    <text evidence="1">The 17 amino acids long immunosuppressive region is present in many retroviral envelope proteins. Synthetic peptides derived from this relatively conserved sequence inhibit immune function in vitro and in vivo.</text>
</comment>
<comment type="domain">
    <text evidence="1">The YXXL motif is involved in determining the exact site of viral release at the surface of infected mononuclear cells and promotes endocytosis. YXXL and di-leucine endocytosis motifs interact directly or indirectly with the clathrin adapter complexes, opperate independently, and their activities are not additive.</text>
</comment>
<comment type="domain">
    <text evidence="1">The CD4-binding region is targeted by the antibody b12.</text>
</comment>
<comment type="PTM">
    <text evidence="1">Highly glycosylated by host. The high number of glycan on the protein is reffered to as 'glycan shield' because it contributes to hide protein sequence from adaptive immune system.</text>
</comment>
<comment type="PTM">
    <text evidence="1">Palmitoylation of the transmembrane protein and of Env polyprotein (prior to its proteolytic cleavage) is essential for their association with host cell membrane lipid rafts. Palmitoylation is therefore required for envelope trafficking to classical lipid rafts, but not for viral replication.</text>
</comment>
<comment type="PTM">
    <text evidence="1">Specific enzymatic cleavages in vivo yield mature proteins. Envelope glycoproteins are synthesized as an inactive precursor that is heavily N-glycosylated and processed likely by host cell furin in the Golgi to yield the mature SU and TM proteins. The cleavage site between SU and TM requires the minimal sequence [KR]-X-[KR]-R. About 2 of the 9 disulfide bonds of gp41 are reduced by P4HB/PDI, following binding to CD4 receptor.</text>
</comment>
<comment type="miscellaneous">
    <text evidence="1">Inhibitors targeting HIV-1 viral envelope proteins are used as antiretroviral drugs. Attachment of virions to the cell surface via non-specific interactions and CD4 binding can be blocked by inhibitors that include cyanovirin-N, cyclotriazadisulfonamide analogs, PRO 2000, TNX 355 and PRO 542. In addition, BMS 806 can block CD4-induced conformational changes. Env interactions with the coreceptor molecules can be targeted by CCR5 antagonists including SCH-D, maraviroc (UK 427857) and aplaviroc (GW 873140), and the CXCR4 antagonist AMD 070. Fusion of viral and cellular membranes can be inhibited by peptides such as enfuvirtide and tifuvirtide (T 1249). Resistance to inhibitors associated with mutations in Env are observed. Most of the time, single mutations confer only a modest reduction in drug susceptibility. Combination of several mutations is usually required to develop a high-level drug resistance.</text>
</comment>
<comment type="miscellaneous">
    <text evidence="1">HIV-1 lineages are divided in three main groups, M (for Major), O (for Outlier), and N (for New, or Non-M, Non-O). The vast majority of strains found worldwide belong to the group M. Group O seems to be endemic to and largely confined to Cameroon and neighboring countries in West Central Africa, where these viruses represent a small minority of HIV-1 strains. The group N is represented by a limited number of isolates from Cameroonian persons. The group M is further subdivided in 9 clades or subtypes (A to D, F to H, J and K).</text>
</comment>
<comment type="similarity">
    <text evidence="1">Belongs to the HIV-1 env protein family.</text>
</comment>
<comment type="online information" name="hivdb">
    <link uri="https://hivdb.stanford.edu"/>
    <text>HIV drug resistance database</text>
</comment>
<comment type="online information" name="HIV drug resistance mutations">
    <link uri="https://www.iasusa.org/hiv-drug-resistance/hiv-drug-resistance-mutations/"/>
</comment>
<accession>Q9WC69</accession>
<protein>
    <recommendedName>
        <fullName evidence="1">Envelope glycoprotein gp160</fullName>
    </recommendedName>
    <alternativeName>
        <fullName evidence="1">Env polyprotein</fullName>
    </alternativeName>
    <component>
        <recommendedName>
            <fullName evidence="1">Surface protein gp120</fullName>
            <shortName evidence="1">SU</shortName>
        </recommendedName>
        <alternativeName>
            <fullName evidence="1">Glycoprotein 120</fullName>
            <shortName evidence="1">gp120</shortName>
        </alternativeName>
    </component>
    <component>
        <recommendedName>
            <fullName evidence="1">Transmembrane protein gp41</fullName>
            <shortName evidence="1">TM</shortName>
        </recommendedName>
        <alternativeName>
            <fullName evidence="1">Glycoprotein 41</fullName>
            <shortName evidence="1">gp41</shortName>
        </alternativeName>
    </component>
</protein>
<reference key="1">
    <citation type="journal article" date="1999" name="AIDS Res. Hum. Retroviruses">
        <title>Virtually full-length sequences of HIV type 1 subtype J reference strains.</title>
        <authorList>
            <person name="Laukkanen T."/>
            <person name="Albert J."/>
            <person name="Liitsola K."/>
            <person name="Green S.D."/>
            <person name="Carr J.K."/>
            <person name="Leitner T."/>
            <person name="McCutchan F.E."/>
            <person name="Salminen M.O."/>
        </authorList>
    </citation>
    <scope>NUCLEOTIDE SEQUENCE [GENOMIC DNA]</scope>
</reference>
<reference key="2">
    <citation type="journal article" date="2003" name="APMIS">
        <title>Pathogens target DC-SIGN to influence their fate DC-SIGN functions as a pathogen receptor with broad specificity.</title>
        <authorList>
            <person name="Geijtenbeek T.B."/>
            <person name="van Kooyk Y."/>
        </authorList>
    </citation>
    <scope>REVIEW</scope>
</reference>
<reference key="3">
    <citation type="journal article" date="2003" name="Biochim. Biophys. Acta">
        <title>The HIV Env-mediated fusion reaction.</title>
        <authorList>
            <person name="Gallo S.A."/>
            <person name="Finnegan C.M."/>
            <person name="Viard M."/>
            <person name="Raviv Y."/>
            <person name="Dimitrov A."/>
            <person name="Rawat S.S."/>
            <person name="Puri A."/>
            <person name="Durell S."/>
            <person name="Blumenthal R."/>
        </authorList>
    </citation>
    <scope>REVIEW</scope>
</reference>
<reference key="4">
    <citation type="journal article" date="2005" name="Cell Death Differ.">
        <title>Mechanisms of apoptosis induction by the HIV-1 envelope.</title>
        <authorList>
            <person name="Perfettini J.-L."/>
            <person name="Castedo M."/>
            <person name="Roumier T."/>
            <person name="Andreau K."/>
            <person name="Nardacci R."/>
            <person name="Piacentini M."/>
            <person name="Kroemer G."/>
        </authorList>
    </citation>
    <scope>REVIEW</scope>
</reference>
<reference key="5">
    <citation type="journal article" date="2005" name="AIDS Res. Hum. Retroviruses">
        <title>V3: HIV's switch-hitter.</title>
        <authorList>
            <person name="Hartley O."/>
            <person name="Klasse P.J."/>
            <person name="Sattentau Q.J."/>
            <person name="Moore J.P."/>
        </authorList>
    </citation>
    <scope>REVIEW</scope>
</reference>
<reference key="6">
    <citation type="journal article" date="2005" name="Drugs">
        <title>Emerging drug targets for antiretroviral therapy.</title>
        <authorList>
            <person name="Reeves J.D."/>
            <person name="Piefer A.J."/>
        </authorList>
    </citation>
    <scope>REVIEW</scope>
</reference>
<reference key="7">
    <citation type="journal article" date="2006" name="EMBO J.">
        <title>HIV and the chemokine system: 10 years later.</title>
        <authorList>
            <person name="Lusso P."/>
        </authorList>
    </citation>
    <scope>REVIEW</scope>
</reference>
<keyword id="KW-0014">AIDS</keyword>
<keyword id="KW-0053">Apoptosis</keyword>
<keyword id="KW-1165">Clathrin-mediated endocytosis of virus by host</keyword>
<keyword id="KW-0165">Cleavage on pair of basic residues</keyword>
<keyword id="KW-0175">Coiled coil</keyword>
<keyword id="KW-1015">Disulfide bond</keyword>
<keyword id="KW-1170">Fusion of virus membrane with host endosomal membrane</keyword>
<keyword id="KW-1168">Fusion of virus membrane with host membrane</keyword>
<keyword id="KW-0325">Glycoprotein</keyword>
<keyword id="KW-1032">Host cell membrane</keyword>
<keyword id="KW-1039">Host endosome</keyword>
<keyword id="KW-1043">Host membrane</keyword>
<keyword id="KW-0945">Host-virus interaction</keyword>
<keyword id="KW-0449">Lipoprotein</keyword>
<keyword id="KW-0472">Membrane</keyword>
<keyword id="KW-0564">Palmitate</keyword>
<keyword id="KW-0732">Signal</keyword>
<keyword id="KW-0812">Transmembrane</keyword>
<keyword id="KW-1133">Transmembrane helix</keyword>
<keyword id="KW-1161">Viral attachment to host cell</keyword>
<keyword id="KW-0261">Viral envelope protein</keyword>
<keyword id="KW-0899">Viral immunoevasion</keyword>
<keyword id="KW-1162">Viral penetration into host cytoplasm</keyword>
<keyword id="KW-0946">Virion</keyword>
<keyword id="KW-1164">Virus endocytosis by host</keyword>
<keyword id="KW-1160">Virus entry into host cell</keyword>
<organism>
    <name type="scientific">Human immunodeficiency virus type 1 group M subtype J (isolate SE9173)</name>
    <name type="common">HIV-1</name>
    <dbReference type="NCBI Taxonomy" id="388904"/>
    <lineage>
        <taxon>Viruses</taxon>
        <taxon>Riboviria</taxon>
        <taxon>Pararnavirae</taxon>
        <taxon>Artverviricota</taxon>
        <taxon>Revtraviricetes</taxon>
        <taxon>Ortervirales</taxon>
        <taxon>Retroviridae</taxon>
        <taxon>Orthoretrovirinae</taxon>
        <taxon>Lentivirus</taxon>
        <taxon>Human immunodeficiency virus type 1</taxon>
    </lineage>
</organism>
<sequence length="850" mass="95858">METQTSWLSLWRWGLMIFGMLMICSARENLWVTVYYGVPVWRDAKTTLFCASDAKAYSTEKHNVWATHACVPTDPNPQEMSLPNVTENFNMWKNDMVDQMQEDIISVWDESLKPCVKITPLCVTLNCSDVNSNNSTDSNSSASNNSPEIMKNCSFNVTTEIRNKRKQEYALFYRQDVVPINSDNKSYILINCNTSVIKQACPKVSFQPIPIHYCAPAGFAILKCNNKTFNGTGPCKNVSTVQCTHGIKPVVSTQLLLNGSVAEGDIIIRSENISDNAKNIIVQLNDTVEIVCTRPNNNTRKGIHMGPGQVLYATGEIIGDIRKAYCNISRKDWNNTLRRVAKKLREHFNKTIDFTSPSGGDIEITTHSFNCGGEFFYCNTSTLFNSSWDENNIKDTNSTNDNTTITIPCKIKQIVRMWQRTGQAIYAPPIAGNITCKSNITGLLLTRDGGNRNGSENGTETFRPTGGNMKDNWRSELYKYKVVELEPLGVAPTKAKRRVVEREKRAVGIGAVFLGFLGTAGSTMGAASITLTVQVRQLLSGIVQQQSNLLKAIXAQQHLLKLTVWGIKQLQARVLAVERYLKDQQLLGIWGCSGKLICTTNVPWNASWSNKSYEDIWENMTWIQWEREINNYTGIIYSLIEEAQNQQETNEKDLLALDKWTNLWNWFNISNWLWYIKIFIMIIGGLIGLRIIFAVLAIVNRVRQGYSPLSFQTLIPNPTEADRPGGIEEGGGEQGRTRSIRLVNGFLALAWDDLRSLCLFSYHRLRDFVLIAARTVGTLGLRGWEILKYLVNLVWYWGQELKNSAISLLNTTAIAVAEGTDRIIEIAQRAFRAILHIPRRIRQGLERALL</sequence>
<gene>
    <name evidence="1" type="primary">env</name>
</gene>
<organismHost>
    <name type="scientific">Homo sapiens</name>
    <name type="common">Human</name>
    <dbReference type="NCBI Taxonomy" id="9606"/>
</organismHost>